<protein>
    <recommendedName>
        <fullName>Rhodopsin</fullName>
    </recommendedName>
</protein>
<accession>O42294</accession>
<keyword id="KW-0966">Cell projection</keyword>
<keyword id="KW-0157">Chromophore</keyword>
<keyword id="KW-1015">Disulfide bond</keyword>
<keyword id="KW-0297">G-protein coupled receptor</keyword>
<keyword id="KW-0325">Glycoprotein</keyword>
<keyword id="KW-0449">Lipoprotein</keyword>
<keyword id="KW-0472">Membrane</keyword>
<keyword id="KW-0597">Phosphoprotein</keyword>
<keyword id="KW-0600">Photoreceptor protein</keyword>
<keyword id="KW-0675">Receptor</keyword>
<keyword id="KW-0681">Retinal protein</keyword>
<keyword id="KW-0716">Sensory transduction</keyword>
<keyword id="KW-0807">Transducer</keyword>
<keyword id="KW-0812">Transmembrane</keyword>
<keyword id="KW-1133">Transmembrane helix</keyword>
<keyword id="KW-0844">Vision</keyword>
<reference key="1">
    <citation type="journal article" date="1997" name="Mol. Phylogenet. Evol.">
        <title>Molecular evolution of the cottoid fish endemic to Lake Baikal deduced from nuclear DNA evidence.</title>
        <authorList>
            <person name="Hunt D.M."/>
            <person name="Fitzgibbon J."/>
            <person name="Slobodyanyuk S.J."/>
            <person name="Bowmaker J.K."/>
            <person name="Dulai K.S."/>
        </authorList>
    </citation>
    <scope>NUCLEOTIDE SEQUENCE [GENOMIC DNA]</scope>
</reference>
<name>OPSD_ABYKO</name>
<proteinExistence type="inferred from homology"/>
<dbReference type="EMBL" id="U97272">
    <property type="protein sequence ID" value="AAB61726.1"/>
    <property type="molecule type" value="Genomic_DNA"/>
</dbReference>
<dbReference type="SMR" id="O42294"/>
<dbReference type="GlyCosmos" id="O42294">
    <property type="glycosylation" value="1 site, No reported glycans"/>
</dbReference>
<dbReference type="GO" id="GO:0016020">
    <property type="term" value="C:membrane"/>
    <property type="evidence" value="ECO:0000250"/>
    <property type="project" value="UniProtKB"/>
</dbReference>
<dbReference type="GO" id="GO:0097381">
    <property type="term" value="C:photoreceptor disc membrane"/>
    <property type="evidence" value="ECO:0000250"/>
    <property type="project" value="UniProtKB"/>
</dbReference>
<dbReference type="GO" id="GO:0005886">
    <property type="term" value="C:plasma membrane"/>
    <property type="evidence" value="ECO:0000250"/>
    <property type="project" value="UniProtKB"/>
</dbReference>
<dbReference type="GO" id="GO:0005502">
    <property type="term" value="F:11-cis retinal binding"/>
    <property type="evidence" value="ECO:0000250"/>
    <property type="project" value="UniProtKB"/>
</dbReference>
<dbReference type="GO" id="GO:0008020">
    <property type="term" value="F:G protein-coupled photoreceptor activity"/>
    <property type="evidence" value="ECO:0000250"/>
    <property type="project" value="UniProtKB"/>
</dbReference>
<dbReference type="GO" id="GO:0016038">
    <property type="term" value="P:absorption of visible light"/>
    <property type="evidence" value="ECO:0000250"/>
    <property type="project" value="UniProtKB"/>
</dbReference>
<dbReference type="GO" id="GO:0016056">
    <property type="term" value="P:G protein-coupled opsin signaling pathway"/>
    <property type="evidence" value="ECO:0000250"/>
    <property type="project" value="UniProtKB"/>
</dbReference>
<dbReference type="GO" id="GO:0007601">
    <property type="term" value="P:visual perception"/>
    <property type="evidence" value="ECO:0007669"/>
    <property type="project" value="UniProtKB-KW"/>
</dbReference>
<dbReference type="CDD" id="cd15080">
    <property type="entry name" value="7tmA_MWS_opsin"/>
    <property type="match status" value="1"/>
</dbReference>
<dbReference type="FunFam" id="1.20.1070.10:FF:000357">
    <property type="entry name" value="Rhodopsin"/>
    <property type="match status" value="1"/>
</dbReference>
<dbReference type="Gene3D" id="1.20.1070.10">
    <property type="entry name" value="Rhodopsin 7-helix transmembrane proteins"/>
    <property type="match status" value="1"/>
</dbReference>
<dbReference type="InterPro" id="IPR050125">
    <property type="entry name" value="GPCR_opsins"/>
</dbReference>
<dbReference type="InterPro" id="IPR000276">
    <property type="entry name" value="GPCR_Rhodpsn"/>
</dbReference>
<dbReference type="InterPro" id="IPR017452">
    <property type="entry name" value="GPCR_Rhodpsn_7TM"/>
</dbReference>
<dbReference type="InterPro" id="IPR001760">
    <property type="entry name" value="Opsin"/>
</dbReference>
<dbReference type="InterPro" id="IPR027430">
    <property type="entry name" value="Retinal_BS"/>
</dbReference>
<dbReference type="InterPro" id="IPR000732">
    <property type="entry name" value="Rhodopsin"/>
</dbReference>
<dbReference type="PANTHER" id="PTHR24240">
    <property type="entry name" value="OPSIN"/>
    <property type="match status" value="1"/>
</dbReference>
<dbReference type="Pfam" id="PF00001">
    <property type="entry name" value="7tm_1"/>
    <property type="match status" value="1"/>
</dbReference>
<dbReference type="PRINTS" id="PR00237">
    <property type="entry name" value="GPCRRHODOPSN"/>
</dbReference>
<dbReference type="PRINTS" id="PR00238">
    <property type="entry name" value="OPSIN"/>
</dbReference>
<dbReference type="PRINTS" id="PR00579">
    <property type="entry name" value="RHODOPSIN"/>
</dbReference>
<dbReference type="SUPFAM" id="SSF81321">
    <property type="entry name" value="Family A G protein-coupled receptor-like"/>
    <property type="match status" value="1"/>
</dbReference>
<dbReference type="PROSITE" id="PS00237">
    <property type="entry name" value="G_PROTEIN_RECEP_F1_1"/>
    <property type="match status" value="1"/>
</dbReference>
<dbReference type="PROSITE" id="PS50262">
    <property type="entry name" value="G_PROTEIN_RECEP_F1_2"/>
    <property type="match status" value="1"/>
</dbReference>
<dbReference type="PROSITE" id="PS00238">
    <property type="entry name" value="OPSIN"/>
    <property type="match status" value="1"/>
</dbReference>
<feature type="chain" id="PRO_0000197643" description="Rhodopsin">
    <location>
        <begin position="1" status="less than"/>
        <end position="289" status="greater than"/>
    </location>
</feature>
<feature type="topological domain" description="Extracellular" evidence="7">
    <location>
        <begin position="1" status="less than"/>
        <end position="7"/>
    </location>
</feature>
<feature type="transmembrane region" description="Helical; Name=1" evidence="1">
    <location>
        <begin position="8"/>
        <end position="32"/>
    </location>
</feature>
<feature type="topological domain" description="Cytoplasmic" evidence="7">
    <location>
        <begin position="33"/>
        <end position="44"/>
    </location>
</feature>
<feature type="transmembrane region" description="Helical; Name=2" evidence="1">
    <location>
        <begin position="45"/>
        <end position="67"/>
    </location>
</feature>
<feature type="topological domain" description="Extracellular" evidence="7">
    <location>
        <begin position="68"/>
        <end position="81"/>
    </location>
</feature>
<feature type="transmembrane region" description="Helical; Name=3" evidence="1">
    <location>
        <begin position="82"/>
        <end position="104"/>
    </location>
</feature>
<feature type="topological domain" description="Cytoplasmic" evidence="7">
    <location>
        <begin position="105"/>
        <end position="123"/>
    </location>
</feature>
<feature type="transmembrane region" description="Helical; Name=4" evidence="1">
    <location>
        <begin position="124"/>
        <end position="144"/>
    </location>
</feature>
<feature type="topological domain" description="Extracellular" evidence="7">
    <location>
        <begin position="145"/>
        <end position="173"/>
    </location>
</feature>
<feature type="transmembrane region" description="Helical; Name=5" evidence="1">
    <location>
        <begin position="174"/>
        <end position="195"/>
    </location>
</feature>
<feature type="topological domain" description="Cytoplasmic" evidence="7">
    <location>
        <begin position="196"/>
        <end position="223"/>
    </location>
</feature>
<feature type="transmembrane region" description="Helical; Name=6" evidence="1">
    <location>
        <begin position="224"/>
        <end position="245"/>
    </location>
</feature>
<feature type="topological domain" description="Extracellular" evidence="7">
    <location>
        <begin position="246"/>
        <end position="257"/>
    </location>
</feature>
<feature type="transmembrane region" description="Helical; Name=7" evidence="1">
    <location>
        <begin position="258"/>
        <end position="279"/>
    </location>
</feature>
<feature type="topological domain" description="Cytoplasmic" evidence="7">
    <location>
        <begin position="280"/>
        <end position="289" status="greater than"/>
    </location>
</feature>
<feature type="short sequence motif" description="'Ionic lock' involved in activated form stabilization" evidence="1">
    <location>
        <begin position="105"/>
        <end position="107"/>
    </location>
</feature>
<feature type="site" description="Plays an important role in the conformation switch to the active conformation" evidence="1">
    <location>
        <position position="84"/>
    </location>
</feature>
<feature type="modified residue" description="N6-(retinylidene)lysine" evidence="1">
    <location>
        <position position="267"/>
    </location>
</feature>
<feature type="glycosylation site" description="N-linked (GlcNAc...) asparagine" evidence="5">
    <location>
        <position position="171"/>
    </location>
</feature>
<feature type="disulfide bond" evidence="6">
    <location>
        <begin position="81"/>
        <end position="158"/>
    </location>
</feature>
<feature type="non-terminal residue">
    <location>
        <position position="1"/>
    </location>
</feature>
<feature type="non-terminal residue">
    <location>
        <position position="289"/>
    </location>
</feature>
<organism>
    <name type="scientific">Abyssocottus korotneffi</name>
    <name type="common">Baikalian deep-water sculpin</name>
    <dbReference type="NCBI Taxonomy" id="61637"/>
    <lineage>
        <taxon>Eukaryota</taxon>
        <taxon>Metazoa</taxon>
        <taxon>Chordata</taxon>
        <taxon>Craniata</taxon>
        <taxon>Vertebrata</taxon>
        <taxon>Euteleostomi</taxon>
        <taxon>Actinopterygii</taxon>
        <taxon>Neopterygii</taxon>
        <taxon>Teleostei</taxon>
        <taxon>Neoteleostei</taxon>
        <taxon>Acanthomorphata</taxon>
        <taxon>Eupercaria</taxon>
        <taxon>Perciformes</taxon>
        <taxon>Cottioidei</taxon>
        <taxon>Cottales</taxon>
        <taxon>Cottidae</taxon>
        <taxon>Abyssocottus</taxon>
    </lineage>
</organism>
<evidence type="ECO:0000250" key="1">
    <source>
        <dbReference type="UniProtKB" id="P02699"/>
    </source>
</evidence>
<evidence type="ECO:0000250" key="2">
    <source>
        <dbReference type="UniProtKB" id="P08100"/>
    </source>
</evidence>
<evidence type="ECO:0000250" key="3">
    <source>
        <dbReference type="UniProtKB" id="P32309"/>
    </source>
</evidence>
<evidence type="ECO:0000250" key="4">
    <source>
        <dbReference type="UniProtKB" id="P35359"/>
    </source>
</evidence>
<evidence type="ECO:0000255" key="5"/>
<evidence type="ECO:0000255" key="6">
    <source>
        <dbReference type="PROSITE-ProRule" id="PRU00521"/>
    </source>
</evidence>
<evidence type="ECO:0000305" key="7"/>
<sequence length="289" mass="32726">YLVNPAAYAALGAYMFLLILIGFPINFLTLYVTLEHKKLRTPLNYILLNLAVANLFMVLGGFTTTMYTSMHGYFVLGRLGCNLEAFFATLGGEIALWSLVVLAIERWIVVCKPISNFRFTEDHAIMGLAFTWVMALACAVPPLVGWSRYIPEGMQCSCGVDYYTRAEGFNNESFVIYMFIVHFLIPLSVIFFCYGRLLCAVKEAPAAQQESETTQRAEKEVSRMVVIMVIGFLVCWLPYASVAWWIFCNQGSDFGPIFMTLPSFFAKSAAIYNPMIYICMNKQFRHCMI</sequence>
<gene>
    <name type="primary">rho</name>
</gene>
<comment type="function">
    <text evidence="1 2 3">Photoreceptor required for image-forming vision at low light intensity. While most salt water fish species use retinal as chromophore, most freshwater fish use 3-dehydroretinal, or a mixture of retinal and 3-dehydroretinal (By similarity). Light-induced isomerization of 11-cis to all-trans retinal triggers a conformational change that activates signaling via G-proteins. Subsequent receptor phosphorylation mediates displacement of the bound G-protein alpha subunit by arrestin and terminates signaling (By similarity).</text>
</comment>
<comment type="subcellular location">
    <subcellularLocation>
        <location evidence="2">Membrane</location>
        <topology evidence="2">Multi-pass membrane protein</topology>
    </subcellularLocation>
    <subcellularLocation>
        <location evidence="4">Cell projection</location>
        <location evidence="4">Cilium</location>
        <location evidence="4">Photoreceptor outer segment</location>
    </subcellularLocation>
    <text evidence="2">Synthesized in the inner segment (IS) of rod photoreceptor cells before vectorial transport to disk membranes in the rod outer segment (OS) photosensory cilia.</text>
</comment>
<comment type="PTM">
    <text evidence="1">Phosphorylated on some or all of the serine and threonine residues present in the C-terminal region.</text>
</comment>
<comment type="PTM">
    <text evidence="1">Contains one covalently linked retinal chromophore.</text>
</comment>
<comment type="similarity">
    <text evidence="6">Belongs to the G-protein coupled receptor 1 family. Opsin subfamily.</text>
</comment>